<organism>
    <name type="scientific">Yersinia enterocolitica serotype O:8 / biotype 1B (strain NCTC 13174 / 8081)</name>
    <dbReference type="NCBI Taxonomy" id="393305"/>
    <lineage>
        <taxon>Bacteria</taxon>
        <taxon>Pseudomonadati</taxon>
        <taxon>Pseudomonadota</taxon>
        <taxon>Gammaproteobacteria</taxon>
        <taxon>Enterobacterales</taxon>
        <taxon>Yersiniaceae</taxon>
        <taxon>Yersinia</taxon>
    </lineage>
</organism>
<gene>
    <name evidence="1" type="primary">hutU</name>
    <name type="ordered locus">YE4095</name>
</gene>
<reference key="1">
    <citation type="journal article" date="2006" name="PLoS Genet.">
        <title>The complete genome sequence and comparative genome analysis of the high pathogenicity Yersinia enterocolitica strain 8081.</title>
        <authorList>
            <person name="Thomson N.R."/>
            <person name="Howard S."/>
            <person name="Wren B.W."/>
            <person name="Holden M.T.G."/>
            <person name="Crossman L."/>
            <person name="Challis G.L."/>
            <person name="Churcher C."/>
            <person name="Mungall K."/>
            <person name="Brooks K."/>
            <person name="Chillingworth T."/>
            <person name="Feltwell T."/>
            <person name="Abdellah Z."/>
            <person name="Hauser H."/>
            <person name="Jagels K."/>
            <person name="Maddison M."/>
            <person name="Moule S."/>
            <person name="Sanders M."/>
            <person name="Whitehead S."/>
            <person name="Quail M.A."/>
            <person name="Dougan G."/>
            <person name="Parkhill J."/>
            <person name="Prentice M.B."/>
        </authorList>
    </citation>
    <scope>NUCLEOTIDE SEQUENCE [LARGE SCALE GENOMIC DNA]</scope>
    <source>
        <strain>NCTC 13174 / 8081</strain>
    </source>
</reference>
<evidence type="ECO:0000255" key="1">
    <source>
        <dbReference type="HAMAP-Rule" id="MF_00577"/>
    </source>
</evidence>
<feature type="chain" id="PRO_1000025162" description="Urocanate hydratase">
    <location>
        <begin position="1"/>
        <end position="563"/>
    </location>
</feature>
<feature type="active site" evidence="1">
    <location>
        <position position="411"/>
    </location>
</feature>
<feature type="binding site" evidence="1">
    <location>
        <begin position="53"/>
        <end position="54"/>
    </location>
    <ligand>
        <name>NAD(+)</name>
        <dbReference type="ChEBI" id="CHEBI:57540"/>
    </ligand>
</feature>
<feature type="binding site" evidence="1">
    <location>
        <position position="131"/>
    </location>
    <ligand>
        <name>NAD(+)</name>
        <dbReference type="ChEBI" id="CHEBI:57540"/>
    </ligand>
</feature>
<feature type="binding site" evidence="1">
    <location>
        <begin position="177"/>
        <end position="179"/>
    </location>
    <ligand>
        <name>NAD(+)</name>
        <dbReference type="ChEBI" id="CHEBI:57540"/>
    </ligand>
</feature>
<feature type="binding site" evidence="1">
    <location>
        <position position="197"/>
    </location>
    <ligand>
        <name>NAD(+)</name>
        <dbReference type="ChEBI" id="CHEBI:57540"/>
    </ligand>
</feature>
<feature type="binding site" evidence="1">
    <location>
        <position position="202"/>
    </location>
    <ligand>
        <name>NAD(+)</name>
        <dbReference type="ChEBI" id="CHEBI:57540"/>
    </ligand>
</feature>
<feature type="binding site" evidence="1">
    <location>
        <begin position="243"/>
        <end position="244"/>
    </location>
    <ligand>
        <name>NAD(+)</name>
        <dbReference type="ChEBI" id="CHEBI:57540"/>
    </ligand>
</feature>
<feature type="binding site" evidence="1">
    <location>
        <begin position="264"/>
        <end position="268"/>
    </location>
    <ligand>
        <name>NAD(+)</name>
        <dbReference type="ChEBI" id="CHEBI:57540"/>
    </ligand>
</feature>
<feature type="binding site" evidence="1">
    <location>
        <begin position="274"/>
        <end position="275"/>
    </location>
    <ligand>
        <name>NAD(+)</name>
        <dbReference type="ChEBI" id="CHEBI:57540"/>
    </ligand>
</feature>
<feature type="binding site" evidence="1">
    <location>
        <position position="323"/>
    </location>
    <ligand>
        <name>NAD(+)</name>
        <dbReference type="ChEBI" id="CHEBI:57540"/>
    </ligand>
</feature>
<feature type="binding site" evidence="1">
    <location>
        <position position="493"/>
    </location>
    <ligand>
        <name>NAD(+)</name>
        <dbReference type="ChEBI" id="CHEBI:57540"/>
    </ligand>
</feature>
<keyword id="KW-0963">Cytoplasm</keyword>
<keyword id="KW-0369">Histidine metabolism</keyword>
<keyword id="KW-0456">Lyase</keyword>
<keyword id="KW-0520">NAD</keyword>
<accession>A1JSW8</accession>
<comment type="function">
    <text evidence="1">Catalyzes the conversion of urocanate to 4-imidazolone-5-propionate.</text>
</comment>
<comment type="catalytic activity">
    <reaction evidence="1">
        <text>4-imidazolone-5-propanoate = trans-urocanate + H2O</text>
        <dbReference type="Rhea" id="RHEA:13101"/>
        <dbReference type="ChEBI" id="CHEBI:15377"/>
        <dbReference type="ChEBI" id="CHEBI:17771"/>
        <dbReference type="ChEBI" id="CHEBI:77893"/>
        <dbReference type="EC" id="4.2.1.49"/>
    </reaction>
</comment>
<comment type="cofactor">
    <cofactor evidence="1">
        <name>NAD(+)</name>
        <dbReference type="ChEBI" id="CHEBI:57540"/>
    </cofactor>
    <text evidence="1">Binds 1 NAD(+) per subunit.</text>
</comment>
<comment type="pathway">
    <text evidence="1">Amino-acid degradation; L-histidine degradation into L-glutamate; N-formimidoyl-L-glutamate from L-histidine: step 2/3.</text>
</comment>
<comment type="subcellular location">
    <subcellularLocation>
        <location evidence="1">Cytoplasm</location>
    </subcellularLocation>
</comment>
<comment type="similarity">
    <text evidence="1">Belongs to the urocanase family.</text>
</comment>
<protein>
    <recommendedName>
        <fullName evidence="1">Urocanate hydratase</fullName>
        <shortName evidence="1">Urocanase</shortName>
        <ecNumber evidence="1">4.2.1.49</ecNumber>
    </recommendedName>
    <alternativeName>
        <fullName evidence="1">Imidazolonepropionate hydrolase</fullName>
    </alternativeName>
</protein>
<name>HUTU_YERE8</name>
<proteinExistence type="inferred from homology"/>
<sequence length="563" mass="61625">MTAQNRFRDTEIRASRGTKLTAKSWMTEAPLRMLMNNLDPEVAENPKELVVYGGIGRAARNWECYDKIVESLTHLNDDETLLIQSGKPVGVFKTHSNAPRVLIANSNLVPHWANWEHFNELDVKGLAMYGQMTAGSWIYIGSQGIVQGTYETFVEAGRQHFGGSLKGRWVLTAGLGGMGGAQPLAATLAGACSLNIECQQSRIDFRLKTRYVDEQATDFDDALARIKKYTSAGKAVSIALCGNAAEILPELVRRGVRPDMVTDQTSAHDPLNGYLPKGWSWEEYRRRAQSEPVLVVNAAKTSMAEHVEAMLAFHHMGIPTFDYGNNIRQMAQDMGVTHAFDFPGFVPAYIRPLFCRGVGPFRWAALSGDAEDIYKTDAKVKELIPDDEHLHHWLDMARERISFQGLPARICWVGLGQRAKLGLAFNEMVRTGELSAPIVIGRDHLDSGSVASPNRETEAMQDGSDAVSDWPLLNALLNTASGATWVSLHHGGGVGMGFSQHSGMVVVCDGSDDAAERIARVLHNDPATGVMRHADAGYDIAINCAQEQGLNLPMIAATQGRKA</sequence>
<dbReference type="EC" id="4.2.1.49" evidence="1"/>
<dbReference type="EMBL" id="AM286415">
    <property type="protein sequence ID" value="CAL14112.1"/>
    <property type="molecule type" value="Genomic_DNA"/>
</dbReference>
<dbReference type="RefSeq" id="WP_011817408.1">
    <property type="nucleotide sequence ID" value="NC_008800.1"/>
</dbReference>
<dbReference type="RefSeq" id="YP_001008236.1">
    <property type="nucleotide sequence ID" value="NC_008800.1"/>
</dbReference>
<dbReference type="SMR" id="A1JSW8"/>
<dbReference type="KEGG" id="yen:YE4095"/>
<dbReference type="PATRIC" id="fig|393305.7.peg.4358"/>
<dbReference type="eggNOG" id="COG2987">
    <property type="taxonomic scope" value="Bacteria"/>
</dbReference>
<dbReference type="HOGENOM" id="CLU_018868_0_1_6"/>
<dbReference type="OrthoDB" id="9764874at2"/>
<dbReference type="UniPathway" id="UPA00379">
    <property type="reaction ID" value="UER00550"/>
</dbReference>
<dbReference type="Proteomes" id="UP000000642">
    <property type="component" value="Chromosome"/>
</dbReference>
<dbReference type="GO" id="GO:0005737">
    <property type="term" value="C:cytoplasm"/>
    <property type="evidence" value="ECO:0007669"/>
    <property type="project" value="UniProtKB-SubCell"/>
</dbReference>
<dbReference type="GO" id="GO:0016153">
    <property type="term" value="F:urocanate hydratase activity"/>
    <property type="evidence" value="ECO:0007669"/>
    <property type="project" value="UniProtKB-UniRule"/>
</dbReference>
<dbReference type="GO" id="GO:0019556">
    <property type="term" value="P:L-histidine catabolic process to glutamate and formamide"/>
    <property type="evidence" value="ECO:0007669"/>
    <property type="project" value="UniProtKB-UniPathway"/>
</dbReference>
<dbReference type="GO" id="GO:0019557">
    <property type="term" value="P:L-histidine catabolic process to glutamate and formate"/>
    <property type="evidence" value="ECO:0007669"/>
    <property type="project" value="UniProtKB-UniPathway"/>
</dbReference>
<dbReference type="FunFam" id="3.40.50.10730:FF:000001">
    <property type="entry name" value="Urocanate hydratase"/>
    <property type="match status" value="1"/>
</dbReference>
<dbReference type="Gene3D" id="3.40.50.10730">
    <property type="entry name" value="Urocanase like domains"/>
    <property type="match status" value="1"/>
</dbReference>
<dbReference type="Gene3D" id="3.40.1770.10">
    <property type="entry name" value="Urocanase superfamily"/>
    <property type="match status" value="1"/>
</dbReference>
<dbReference type="HAMAP" id="MF_00577">
    <property type="entry name" value="HutU"/>
    <property type="match status" value="1"/>
</dbReference>
<dbReference type="InterPro" id="IPR055351">
    <property type="entry name" value="Urocanase"/>
</dbReference>
<dbReference type="InterPro" id="IPR023637">
    <property type="entry name" value="Urocanase-like"/>
</dbReference>
<dbReference type="InterPro" id="IPR035401">
    <property type="entry name" value="Urocanase_C"/>
</dbReference>
<dbReference type="InterPro" id="IPR038364">
    <property type="entry name" value="Urocanase_central_sf"/>
</dbReference>
<dbReference type="InterPro" id="IPR023636">
    <property type="entry name" value="Urocanase_CS"/>
</dbReference>
<dbReference type="InterPro" id="IPR035400">
    <property type="entry name" value="Urocanase_N"/>
</dbReference>
<dbReference type="InterPro" id="IPR035085">
    <property type="entry name" value="Urocanase_Rossmann-like"/>
</dbReference>
<dbReference type="InterPro" id="IPR036190">
    <property type="entry name" value="Urocanase_sf"/>
</dbReference>
<dbReference type="NCBIfam" id="TIGR01228">
    <property type="entry name" value="hutU"/>
    <property type="match status" value="1"/>
</dbReference>
<dbReference type="NCBIfam" id="NF003820">
    <property type="entry name" value="PRK05414.1"/>
    <property type="match status" value="1"/>
</dbReference>
<dbReference type="PANTHER" id="PTHR12216">
    <property type="entry name" value="UROCANATE HYDRATASE"/>
    <property type="match status" value="1"/>
</dbReference>
<dbReference type="PANTHER" id="PTHR12216:SF4">
    <property type="entry name" value="UROCANATE HYDRATASE"/>
    <property type="match status" value="1"/>
</dbReference>
<dbReference type="Pfam" id="PF01175">
    <property type="entry name" value="Urocanase"/>
    <property type="match status" value="1"/>
</dbReference>
<dbReference type="Pfam" id="PF17392">
    <property type="entry name" value="Urocanase_C"/>
    <property type="match status" value="1"/>
</dbReference>
<dbReference type="Pfam" id="PF17391">
    <property type="entry name" value="Urocanase_N"/>
    <property type="match status" value="1"/>
</dbReference>
<dbReference type="PIRSF" id="PIRSF001423">
    <property type="entry name" value="Urocanate_hydrat"/>
    <property type="match status" value="1"/>
</dbReference>
<dbReference type="SUPFAM" id="SSF111326">
    <property type="entry name" value="Urocanase"/>
    <property type="match status" value="1"/>
</dbReference>
<dbReference type="PROSITE" id="PS01233">
    <property type="entry name" value="UROCANASE"/>
    <property type="match status" value="1"/>
</dbReference>